<protein>
    <recommendedName>
        <fullName evidence="6">Histone macroH2A1.1</fullName>
    </recommendedName>
</protein>
<proteinExistence type="evidence at protein level"/>
<gene>
    <name evidence="9" type="ORF">CAOG_004778</name>
</gene>
<name>H2AY_CAPO3</name>
<sequence length="368" mass="38580">MAKSKKIVAATSGSRSRSSRAGLAFPVGRVHRLLRKGHFADRIGSGSAVYLAAVLEYLTAEILELAGNAARDNRKTRINPRHIQLAVRNDEELSKLFTGVVIPSGGTLPHIWPALIPNEAKDSSTASASFNAPAKSATVKALAAAKSAGKKPAAVSSSSAAASSSSSASSSSSVAPKKPVRGFTILSKKTLHLGQTLYVVNGDLTEVRCDAVVHPTNGTMSFAGQVGGAIRAAAGAGVDAEVNSYMSEHSQLQVTKAAITSGHNLPSKWIVHVHSPNYSNAATATDALTQTIRNALTLADTKSIKTIAFPSIGSGNNHFPKHIAAQTILQAISAYFMSIMSSSIKEVYFVLFDQESINVYNAELINTN</sequence>
<feature type="chain" id="PRO_0000456369" description="Histone macroH2A1.1">
    <location>
        <begin position="1"/>
        <end position="368"/>
    </location>
</feature>
<feature type="domain" description="Macro" evidence="3">
    <location>
        <begin position="184"/>
        <end position="368"/>
    </location>
</feature>
<feature type="region of interest" description="Disordered" evidence="4">
    <location>
        <begin position="154"/>
        <end position="177"/>
    </location>
</feature>
<feature type="binding site" evidence="8 11">
    <location>
        <position position="203"/>
    </location>
    <ligand>
        <name>a glycoprotein</name>
        <dbReference type="ChEBI" id="CHEBI:17089"/>
    </ligand>
    <ligandPart>
        <name>poly[(1''-&gt;2')-ADP-alpha-D-ribose] group</name>
        <dbReference type="ChEBI" id="CHEBI:157741"/>
    </ligandPart>
</feature>
<feature type="binding site" evidence="8 11">
    <location>
        <position position="204"/>
    </location>
    <ligand>
        <name>a glycoprotein</name>
        <dbReference type="ChEBI" id="CHEBI:17089"/>
    </ligand>
    <ligandPart>
        <name>poly[(1''-&gt;2')-ADP-alpha-D-ribose] group</name>
        <dbReference type="ChEBI" id="CHEBI:157741"/>
    </ligandPart>
</feature>
<feature type="binding site" evidence="8 11">
    <location>
        <position position="225"/>
    </location>
    <ligand>
        <name>a glycoprotein</name>
        <dbReference type="ChEBI" id="CHEBI:17089"/>
    </ligand>
    <ligandPart>
        <name>poly[(1''-&gt;2')-ADP-alpha-D-ribose] group</name>
        <dbReference type="ChEBI" id="CHEBI:157741"/>
    </ligandPart>
</feature>
<feature type="binding site" evidence="8 11">
    <location>
        <position position="226"/>
    </location>
    <ligand>
        <name>a glycoprotein</name>
        <dbReference type="ChEBI" id="CHEBI:17089"/>
    </ligand>
    <ligandPart>
        <name>poly[(1''-&gt;2')-ADP-alpha-D-ribose] group</name>
        <dbReference type="ChEBI" id="CHEBI:157741"/>
    </ligandPart>
</feature>
<feature type="binding site" evidence="8 11">
    <location>
        <position position="275"/>
    </location>
    <ligand>
        <name>a glycoprotein</name>
        <dbReference type="ChEBI" id="CHEBI:17089"/>
    </ligand>
    <ligandPart>
        <name>poly[(1''-&gt;2')-ADP-alpha-D-ribose] group</name>
        <dbReference type="ChEBI" id="CHEBI:157741"/>
    </ligandPart>
</feature>
<feature type="binding site" evidence="8 11">
    <location>
        <position position="313"/>
    </location>
    <ligand>
        <name>a glycoprotein</name>
        <dbReference type="ChEBI" id="CHEBI:17089"/>
    </ligand>
    <ligandPart>
        <name>poly[(1''-&gt;2')-ADP-alpha-D-ribose] group</name>
        <dbReference type="ChEBI" id="CHEBI:157741"/>
    </ligandPart>
</feature>
<feature type="binding site" evidence="8 11">
    <location>
        <position position="314"/>
    </location>
    <ligand>
        <name>a glycoprotein</name>
        <dbReference type="ChEBI" id="CHEBI:17089"/>
    </ligand>
    <ligandPart>
        <name>poly[(1''-&gt;2')-ADP-alpha-D-ribose] group</name>
        <dbReference type="ChEBI" id="CHEBI:157741"/>
    </ligandPart>
</feature>
<feature type="binding site" evidence="8 11">
    <location>
        <position position="315"/>
    </location>
    <ligand>
        <name>a glycoprotein</name>
        <dbReference type="ChEBI" id="CHEBI:17089"/>
    </ligand>
    <ligandPart>
        <name>poly[(1''-&gt;2')-ADP-alpha-D-ribose] group</name>
        <dbReference type="ChEBI" id="CHEBI:157741"/>
    </ligandPart>
</feature>
<feature type="binding site" evidence="8 11">
    <location>
        <position position="316"/>
    </location>
    <ligand>
        <name>a glycoprotein</name>
        <dbReference type="ChEBI" id="CHEBI:17089"/>
    </ligand>
    <ligandPart>
        <name>poly[(1''-&gt;2')-ADP-alpha-D-ribose] group</name>
        <dbReference type="ChEBI" id="CHEBI:157741"/>
    </ligandPart>
</feature>
<feature type="binding site" evidence="8 11">
    <location>
        <position position="317"/>
    </location>
    <ligand>
        <name>a glycoprotein</name>
        <dbReference type="ChEBI" id="CHEBI:17089"/>
    </ligand>
    <ligandPart>
        <name>poly[(1''-&gt;2')-ADP-alpha-D-ribose] group</name>
        <dbReference type="ChEBI" id="CHEBI:157741"/>
    </ligandPart>
</feature>
<feature type="mutagenesis site" description="Reduced affinity for poly-ADP-ribose." evidence="5">
    <original>Q</original>
    <variation>E</variation>
    <location>
        <position position="225"/>
    </location>
</feature>
<feature type="mutagenesis site" description="Reduced affinity for poly-ADP-ribose." evidence="5">
    <original>N</original>
    <variation>R</variation>
    <location>
        <position position="316"/>
    </location>
</feature>
<feature type="strand" evidence="12">
    <location>
        <begin position="184"/>
        <end position="190"/>
    </location>
</feature>
<feature type="strand" evidence="12">
    <location>
        <begin position="196"/>
        <end position="202"/>
    </location>
</feature>
<feature type="helix" evidence="12">
    <location>
        <begin position="204"/>
        <end position="206"/>
    </location>
</feature>
<feature type="strand" evidence="12">
    <location>
        <begin position="209"/>
        <end position="216"/>
    </location>
</feature>
<feature type="helix" evidence="12">
    <location>
        <begin position="224"/>
        <end position="234"/>
    </location>
</feature>
<feature type="helix" evidence="12">
    <location>
        <begin position="237"/>
        <end position="249"/>
    </location>
</feature>
<feature type="strand" evidence="12">
    <location>
        <begin position="257"/>
        <end position="261"/>
    </location>
</feature>
<feature type="strand" evidence="12">
    <location>
        <begin position="265"/>
        <end position="274"/>
    </location>
</feature>
<feature type="helix" evidence="12">
    <location>
        <begin position="283"/>
        <end position="301"/>
    </location>
</feature>
<feature type="strand" evidence="12">
    <location>
        <begin position="306"/>
        <end position="309"/>
    </location>
</feature>
<feature type="strand" evidence="12">
    <location>
        <begin position="313"/>
        <end position="315"/>
    </location>
</feature>
<feature type="helix" evidence="12">
    <location>
        <begin position="321"/>
        <end position="336"/>
    </location>
</feature>
<feature type="strand" evidence="12">
    <location>
        <begin position="338"/>
        <end position="340"/>
    </location>
</feature>
<feature type="strand" evidence="12">
    <location>
        <begin position="346"/>
        <end position="353"/>
    </location>
</feature>
<feature type="helix" evidence="12">
    <location>
        <begin position="354"/>
        <end position="365"/>
    </location>
</feature>
<keyword id="KW-0002">3D-structure</keyword>
<keyword id="KW-0156">Chromatin regulator</keyword>
<keyword id="KW-0158">Chromosome</keyword>
<keyword id="KW-0238">DNA-binding</keyword>
<keyword id="KW-0544">Nucleosome core</keyword>
<keyword id="KW-0539">Nucleus</keyword>
<keyword id="KW-1185">Reference proteome</keyword>
<reference key="1">
    <citation type="submission" date="2011-02" db="EMBL/GenBank/DDBJ databases">
        <title>The Genome Sequence of Capsaspora owczarzaki ATCC 30864.</title>
        <authorList>
            <person name="Russ C."/>
            <person name="Cuomo C."/>
            <person name="Burger G."/>
            <person name="Gray M.W."/>
            <person name="Holland P.W.H."/>
            <person name="King N."/>
            <person name="Lang F.B.F."/>
            <person name="Roger A.J."/>
            <person name="Ruiz-Trillo I."/>
            <person name="Young S.K."/>
            <person name="Zeng Q."/>
            <person name="Gargeya S."/>
            <person name="Alvarado L."/>
            <person name="Berlin A."/>
            <person name="Chapman S.B."/>
            <person name="Chen Z."/>
            <person name="Freedman E."/>
            <person name="Gellesch M."/>
            <person name="Goldberg J."/>
            <person name="Griggs A."/>
            <person name="Gujja S."/>
            <person name="Heilman E."/>
            <person name="Heiman D."/>
            <person name="Howarth C."/>
            <person name="Mehta T."/>
            <person name="Neiman D."/>
            <person name="Pearson M."/>
            <person name="Roberts A."/>
            <person name="Saif S."/>
            <person name="Shea T."/>
            <person name="Shenoy N."/>
            <person name="Sisk P."/>
            <person name="Stolte C."/>
            <person name="Sykes S."/>
            <person name="White J."/>
            <person name="Yandava C."/>
            <person name="Haas B."/>
            <person name="Nusbaum C."/>
            <person name="Birren B."/>
        </authorList>
    </citation>
    <scope>NUCLEOTIDE SEQUENCE [LARGE SCALE GENOMIC DNA]</scope>
    <source>
        <strain>ATCC 30864</strain>
    </source>
</reference>
<reference evidence="10 11" key="2">
    <citation type="journal article" date="2021" name="Nat. Struct. Mol. Biol.">
        <title>Evolution of a histone variant involved in compartmental regulation of NAD metabolism.</title>
        <authorList>
            <person name="Guberovic I."/>
            <person name="Hurtado-Bages S."/>
            <person name="Rivera-Casas C."/>
            <person name="Knobloch G."/>
            <person name="Malinverni R."/>
            <person name="Valero V."/>
            <person name="Leger M.M."/>
            <person name="Garcia J."/>
            <person name="Basquin J."/>
            <person name="Gomez de Cedron M."/>
            <person name="Frigole-Vivas M."/>
            <person name="Cheema M.S."/>
            <person name="Perez A."/>
            <person name="Ausio J."/>
            <person name="Ramirez de Molina A."/>
            <person name="Salvatella X."/>
            <person name="Ruiz-Trillo I."/>
            <person name="Eirin-Lopez J.M."/>
            <person name="Ladurner A.G."/>
            <person name="Buschbeck M."/>
        </authorList>
    </citation>
    <scope>X-RAY CRYSTALLOGRAPHY (1.34 ANGSTROMS) OF 182-368 IN COMPLEX WITH ADP-D-RIBOSE</scope>
    <scope>FUNCTION</scope>
    <scope>DOMAIN</scope>
    <scope>DEVELOPMENTAL STAGE</scope>
    <scope>MUTAGENESIS OF GLN-225 AND ASN-316</scope>
</reference>
<evidence type="ECO:0000250" key="1">
    <source>
        <dbReference type="UniProtKB" id="O75367"/>
    </source>
</evidence>
<evidence type="ECO:0000250" key="2">
    <source>
        <dbReference type="UniProtKB" id="O93327"/>
    </source>
</evidence>
<evidence type="ECO:0000255" key="3">
    <source>
        <dbReference type="PROSITE-ProRule" id="PRU00490"/>
    </source>
</evidence>
<evidence type="ECO:0000256" key="4">
    <source>
        <dbReference type="SAM" id="MobiDB-lite"/>
    </source>
</evidence>
<evidence type="ECO:0000269" key="5">
    <source>
    </source>
</evidence>
<evidence type="ECO:0000303" key="6">
    <source>
    </source>
</evidence>
<evidence type="ECO:0000305" key="7"/>
<evidence type="ECO:0000305" key="8">
    <source>
    </source>
</evidence>
<evidence type="ECO:0000312" key="9">
    <source>
        <dbReference type="EMBL" id="KJE94086.1"/>
    </source>
</evidence>
<evidence type="ECO:0007744" key="10">
    <source>
        <dbReference type="PDB" id="7NY6"/>
    </source>
</evidence>
<evidence type="ECO:0007744" key="11">
    <source>
        <dbReference type="PDB" id="7NY7"/>
    </source>
</evidence>
<evidence type="ECO:0007829" key="12">
    <source>
        <dbReference type="PDB" id="7NY6"/>
    </source>
</evidence>
<accession>A0A0D2UG83</accession>
<dbReference type="EMBL" id="KE346366">
    <property type="protein sequence ID" value="KJE94086.1"/>
    <property type="molecule type" value="Genomic_DNA"/>
</dbReference>
<dbReference type="RefSeq" id="XP_004347529.1">
    <property type="nucleotide sequence ID" value="XM_004347479.2"/>
</dbReference>
<dbReference type="PDB" id="7NY6">
    <property type="method" value="X-ray"/>
    <property type="resolution" value="1.34 A"/>
    <property type="chains" value="A=182-368"/>
</dbReference>
<dbReference type="PDB" id="7NY7">
    <property type="method" value="X-ray"/>
    <property type="resolution" value="2.00 A"/>
    <property type="chains" value="A=182-368"/>
</dbReference>
<dbReference type="PDBsum" id="7NY6"/>
<dbReference type="PDBsum" id="7NY7"/>
<dbReference type="SMR" id="A0A0D2UG83"/>
<dbReference type="STRING" id="595528.A0A0D2UG83"/>
<dbReference type="EnsemblProtists" id="KJE94086">
    <property type="protein sequence ID" value="KJE94086"/>
    <property type="gene ID" value="CAOG_004778"/>
</dbReference>
<dbReference type="eggNOG" id="KOG1756">
    <property type="taxonomic scope" value="Eukaryota"/>
</dbReference>
<dbReference type="eggNOG" id="KOG2633">
    <property type="taxonomic scope" value="Eukaryota"/>
</dbReference>
<dbReference type="InParanoid" id="A0A0D2UG83"/>
<dbReference type="OrthoDB" id="8174923at2759"/>
<dbReference type="PhylomeDB" id="A0A0D2UG83"/>
<dbReference type="Proteomes" id="UP000008743">
    <property type="component" value="Unassembled WGS sequence"/>
</dbReference>
<dbReference type="GO" id="GO:0000786">
    <property type="term" value="C:nucleosome"/>
    <property type="evidence" value="ECO:0007669"/>
    <property type="project" value="UniProtKB-KW"/>
</dbReference>
<dbReference type="GO" id="GO:0005634">
    <property type="term" value="C:nucleus"/>
    <property type="evidence" value="ECO:0007669"/>
    <property type="project" value="UniProtKB-SubCell"/>
</dbReference>
<dbReference type="GO" id="GO:0072570">
    <property type="term" value="F:ADP-D-ribose binding"/>
    <property type="evidence" value="ECO:0000314"/>
    <property type="project" value="UniProtKB"/>
</dbReference>
<dbReference type="GO" id="GO:0160002">
    <property type="term" value="F:ADP-D-ribose modification-dependent protein binding"/>
    <property type="evidence" value="ECO:0000314"/>
    <property type="project" value="UniProtKB"/>
</dbReference>
<dbReference type="GO" id="GO:0003677">
    <property type="term" value="F:DNA binding"/>
    <property type="evidence" value="ECO:0007669"/>
    <property type="project" value="UniProtKB-KW"/>
</dbReference>
<dbReference type="GO" id="GO:0046982">
    <property type="term" value="F:protein heterodimerization activity"/>
    <property type="evidence" value="ECO:0007669"/>
    <property type="project" value="InterPro"/>
</dbReference>
<dbReference type="GO" id="GO:0030527">
    <property type="term" value="F:structural constituent of chromatin"/>
    <property type="evidence" value="ECO:0007669"/>
    <property type="project" value="InterPro"/>
</dbReference>
<dbReference type="GO" id="GO:0006325">
    <property type="term" value="P:chromatin organization"/>
    <property type="evidence" value="ECO:0007669"/>
    <property type="project" value="UniProtKB-KW"/>
</dbReference>
<dbReference type="GO" id="GO:0010836">
    <property type="term" value="P:negative regulation of protein ADP-ribosylation"/>
    <property type="evidence" value="ECO:0000314"/>
    <property type="project" value="UniProtKB"/>
</dbReference>
<dbReference type="GO" id="GO:1902688">
    <property type="term" value="P:regulation of NAD metabolic process"/>
    <property type="evidence" value="ECO:0000314"/>
    <property type="project" value="UniProtKB"/>
</dbReference>
<dbReference type="CDD" id="cd00074">
    <property type="entry name" value="HFD_H2A"/>
    <property type="match status" value="1"/>
</dbReference>
<dbReference type="FunFam" id="3.40.220.10:FF:000002">
    <property type="entry name" value="Core histone macro-H2A"/>
    <property type="match status" value="1"/>
</dbReference>
<dbReference type="FunFam" id="1.10.20.10:FF:000103">
    <property type="entry name" value="Histone H2A type 1"/>
    <property type="match status" value="1"/>
</dbReference>
<dbReference type="Gene3D" id="1.10.20.10">
    <property type="entry name" value="Histone, subunit A"/>
    <property type="match status" value="1"/>
</dbReference>
<dbReference type="Gene3D" id="3.40.220.10">
    <property type="entry name" value="Leucine Aminopeptidase, subunit E, domain 1"/>
    <property type="match status" value="1"/>
</dbReference>
<dbReference type="InterPro" id="IPR009072">
    <property type="entry name" value="Histone-fold"/>
</dbReference>
<dbReference type="InterPro" id="IPR002119">
    <property type="entry name" value="Histone_H2A"/>
</dbReference>
<dbReference type="InterPro" id="IPR007125">
    <property type="entry name" value="Histone_H2A/H2B/H3"/>
</dbReference>
<dbReference type="InterPro" id="IPR032454">
    <property type="entry name" value="Histone_H2A_C"/>
</dbReference>
<dbReference type="InterPro" id="IPR032458">
    <property type="entry name" value="Histone_H2A_CS"/>
</dbReference>
<dbReference type="InterPro" id="IPR002589">
    <property type="entry name" value="Macro_dom"/>
</dbReference>
<dbReference type="InterPro" id="IPR043472">
    <property type="entry name" value="Macro_dom-like"/>
</dbReference>
<dbReference type="PANTHER" id="PTHR23430">
    <property type="entry name" value="HISTONE H2A"/>
    <property type="match status" value="1"/>
</dbReference>
<dbReference type="Pfam" id="PF00125">
    <property type="entry name" value="Histone"/>
    <property type="match status" value="1"/>
</dbReference>
<dbReference type="Pfam" id="PF16211">
    <property type="entry name" value="Histone_H2A_C"/>
    <property type="match status" value="1"/>
</dbReference>
<dbReference type="Pfam" id="PF01661">
    <property type="entry name" value="Macro"/>
    <property type="match status" value="1"/>
</dbReference>
<dbReference type="PRINTS" id="PR00620">
    <property type="entry name" value="HISTONEH2A"/>
</dbReference>
<dbReference type="SMART" id="SM00506">
    <property type="entry name" value="A1pp"/>
    <property type="match status" value="1"/>
</dbReference>
<dbReference type="SMART" id="SM00414">
    <property type="entry name" value="H2A"/>
    <property type="match status" value="1"/>
</dbReference>
<dbReference type="SUPFAM" id="SSF47113">
    <property type="entry name" value="Histone-fold"/>
    <property type="match status" value="1"/>
</dbReference>
<dbReference type="SUPFAM" id="SSF52949">
    <property type="entry name" value="Macro domain-like"/>
    <property type="match status" value="1"/>
</dbReference>
<dbReference type="PROSITE" id="PS00046">
    <property type="entry name" value="HISTONE_H2A"/>
    <property type="match status" value="1"/>
</dbReference>
<dbReference type="PROSITE" id="PS51154">
    <property type="entry name" value="MACRO"/>
    <property type="match status" value="1"/>
</dbReference>
<organism>
    <name type="scientific">Capsaspora owczarzaki (strain ATCC 30864)</name>
    <dbReference type="NCBI Taxonomy" id="595528"/>
    <lineage>
        <taxon>Eukaryota</taxon>
        <taxon>Filasterea</taxon>
        <taxon>Capsaspora</taxon>
    </lineage>
</organism>
<comment type="function">
    <text evidence="2">Variant histone H2A which replaces conventional H2A in a subset of nucleosomes where it represses transcription. Nucleosomes wrap and compact DNA into chromatin, limiting DNA accessibility to the cellular machineries which require DNA as a template. Histones thereby play a central role in transcription regulation, DNA repair, DNA replication and chromosomal stability. DNA accessibility is regulated via a complex set of post-translational modifications of histones, also called histone code, and nucleosome remodeling.</text>
</comment>
<comment type="function">
    <text evidence="5">Specifically binds poly-ADP-ribose and plays a key role in NAD(+) metabolism (PubMed:34887560). Able to bind to the ends of poly-ADP-ribose chains created by PARP1 and cap them (PubMed:34887560). This prevents PARP1 from further addition of ADP-ribose and thus limits the consumption of nuclear NAD(+), allowing the cell to maintain proper NAD(+) levels in both the nucleus and the mitochondria to promote proper mitochondrial respiration (PubMed:34887560).</text>
</comment>
<comment type="subunit">
    <text evidence="1">The nucleosome is a histone octamer containing two molecules each of H2A, H2B, H3 and H4 assembled in one H3-H4 heterotetramer and two H2A-H2B heterodimers.</text>
</comment>
<comment type="subcellular location">
    <subcellularLocation>
        <location evidence="1">Nucleus</location>
    </subcellularLocation>
    <subcellularLocation>
        <location evidence="1">Chromosome</location>
    </subcellularLocation>
</comment>
<comment type="developmental stage">
    <text evidence="5">Highly expressed during the cystic life stage.</text>
</comment>
<comment type="domain">
    <text evidence="5">The macro domain specifically binds poly-ADP-ribose (PubMed:34887560). Binds poly-ADP-ribose with much higher affinity compared to vertebrate macroH2A1.1 orthologs (PubMed:34887560).</text>
</comment>
<comment type="similarity">
    <text evidence="7">Belongs to the histone H2A family.</text>
</comment>